<gene>
    <name evidence="1" type="primary">caiA</name>
    <name type="ordered locus">CKO_03344</name>
</gene>
<keyword id="KW-0963">Cytoplasm</keyword>
<keyword id="KW-0274">FAD</keyword>
<keyword id="KW-0285">Flavoprotein</keyword>
<keyword id="KW-0560">Oxidoreductase</keyword>
<keyword id="KW-1185">Reference proteome</keyword>
<organism>
    <name type="scientific">Citrobacter koseri (strain ATCC BAA-895 / CDC 4225-83 / SGSC4696)</name>
    <dbReference type="NCBI Taxonomy" id="290338"/>
    <lineage>
        <taxon>Bacteria</taxon>
        <taxon>Pseudomonadati</taxon>
        <taxon>Pseudomonadota</taxon>
        <taxon>Gammaproteobacteria</taxon>
        <taxon>Enterobacterales</taxon>
        <taxon>Enterobacteriaceae</taxon>
        <taxon>Citrobacter</taxon>
    </lineage>
</organism>
<reference key="1">
    <citation type="submission" date="2007-08" db="EMBL/GenBank/DDBJ databases">
        <authorList>
            <consortium name="The Citrobacter koseri Genome Sequencing Project"/>
            <person name="McClelland M."/>
            <person name="Sanderson E.K."/>
            <person name="Porwollik S."/>
            <person name="Spieth J."/>
            <person name="Clifton W.S."/>
            <person name="Latreille P."/>
            <person name="Courtney L."/>
            <person name="Wang C."/>
            <person name="Pepin K."/>
            <person name="Bhonagiri V."/>
            <person name="Nash W."/>
            <person name="Johnson M."/>
            <person name="Thiruvilangam P."/>
            <person name="Wilson R."/>
        </authorList>
    </citation>
    <scope>NUCLEOTIDE SEQUENCE [LARGE SCALE GENOMIC DNA]</scope>
    <source>
        <strain>ATCC BAA-895 / CDC 4225-83 / SGSC4696</strain>
    </source>
</reference>
<accession>A8ALR4</accession>
<evidence type="ECO:0000255" key="1">
    <source>
        <dbReference type="HAMAP-Rule" id="MF_01052"/>
    </source>
</evidence>
<feature type="chain" id="PRO_1000064344" description="Crotonobetainyl-CoA reductase">
    <location>
        <begin position="1"/>
        <end position="380"/>
    </location>
</feature>
<name>CAIA_CITK8</name>
<sequence>MDFNLNDEQELFVAGIRELMASENWEAYFAECDRDSVYPERFVKALADMGIDSLLIPEEHGGLEAGFVTVAAVWMELGRLGAPTYVLYQLPGGFNTFLREGTQEQIDKIMAFQGTGKQMWNSAITEPGAGSDVGSLKTTYTRKNGKVYLNGSKCFITSSAYTPYIVVMARDGASPDKPIYTEWFVDMSKPGIKVNKLEKLGLRMDSCCEINFDDVELDEKDMFGREGNGFNRVKEEFDHERFLVALTNYGTAMCAFEDAARYANQRVQFGETIGRFQLIQEKFAHMAIKLNSMKNMLLEAAWKADNGTITSGDAAMCKYFCANAAFDVVDSAMQVLGGVGIAGNHRITRFWRDLRVDRVSGGSDEMQILTLGRAVLKQYR</sequence>
<dbReference type="EC" id="1.3.8.13" evidence="1"/>
<dbReference type="EMBL" id="CP000822">
    <property type="protein sequence ID" value="ABV14427.1"/>
    <property type="molecule type" value="Genomic_DNA"/>
</dbReference>
<dbReference type="RefSeq" id="WP_012134130.1">
    <property type="nucleotide sequence ID" value="NC_009792.1"/>
</dbReference>
<dbReference type="SMR" id="A8ALR4"/>
<dbReference type="STRING" id="290338.CKO_03344"/>
<dbReference type="GeneID" id="45137107"/>
<dbReference type="KEGG" id="cko:CKO_03344"/>
<dbReference type="HOGENOM" id="CLU_018204_0_2_6"/>
<dbReference type="OrthoDB" id="9769473at2"/>
<dbReference type="UniPathway" id="UPA00117"/>
<dbReference type="Proteomes" id="UP000008148">
    <property type="component" value="Chromosome"/>
</dbReference>
<dbReference type="GO" id="GO:0005737">
    <property type="term" value="C:cytoplasm"/>
    <property type="evidence" value="ECO:0007669"/>
    <property type="project" value="UniProtKB-SubCell"/>
</dbReference>
<dbReference type="GO" id="GO:0003995">
    <property type="term" value="F:acyl-CoA dehydrogenase activity"/>
    <property type="evidence" value="ECO:0007669"/>
    <property type="project" value="InterPro"/>
</dbReference>
<dbReference type="GO" id="GO:0050660">
    <property type="term" value="F:flavin adenine dinucleotide binding"/>
    <property type="evidence" value="ECO:0007669"/>
    <property type="project" value="InterPro"/>
</dbReference>
<dbReference type="GO" id="GO:0009437">
    <property type="term" value="P:carnitine metabolic process"/>
    <property type="evidence" value="ECO:0007669"/>
    <property type="project" value="UniProtKB-UniRule"/>
</dbReference>
<dbReference type="CDD" id="cd00567">
    <property type="entry name" value="ACAD"/>
    <property type="match status" value="1"/>
</dbReference>
<dbReference type="FunFam" id="1.20.140.10:FF:000001">
    <property type="entry name" value="Acyl-CoA dehydrogenase"/>
    <property type="match status" value="1"/>
</dbReference>
<dbReference type="FunFam" id="2.40.110.10:FF:000002">
    <property type="entry name" value="Acyl-CoA dehydrogenase fadE12"/>
    <property type="match status" value="1"/>
</dbReference>
<dbReference type="FunFam" id="1.10.540.10:FF:000005">
    <property type="entry name" value="Crotonobetainyl-CoA reductase"/>
    <property type="match status" value="1"/>
</dbReference>
<dbReference type="Gene3D" id="1.10.540.10">
    <property type="entry name" value="Acyl-CoA dehydrogenase/oxidase, N-terminal domain"/>
    <property type="match status" value="1"/>
</dbReference>
<dbReference type="Gene3D" id="2.40.110.10">
    <property type="entry name" value="Butyryl-CoA Dehydrogenase, subunit A, domain 2"/>
    <property type="match status" value="1"/>
</dbReference>
<dbReference type="Gene3D" id="1.20.140.10">
    <property type="entry name" value="Butyryl-CoA Dehydrogenase, subunit A, domain 3"/>
    <property type="match status" value="1"/>
</dbReference>
<dbReference type="HAMAP" id="MF_01052">
    <property type="entry name" value="CaiA"/>
    <property type="match status" value="1"/>
</dbReference>
<dbReference type="InterPro" id="IPR006089">
    <property type="entry name" value="Acyl-CoA_DH_CS"/>
</dbReference>
<dbReference type="InterPro" id="IPR006091">
    <property type="entry name" value="Acyl-CoA_Oxase/DH_mid-dom"/>
</dbReference>
<dbReference type="InterPro" id="IPR046373">
    <property type="entry name" value="Acyl-CoA_Oxase/DH_mid-dom_sf"/>
</dbReference>
<dbReference type="InterPro" id="IPR036250">
    <property type="entry name" value="AcylCo_DH-like_C"/>
</dbReference>
<dbReference type="InterPro" id="IPR009075">
    <property type="entry name" value="AcylCo_DH/oxidase_C"/>
</dbReference>
<dbReference type="InterPro" id="IPR013786">
    <property type="entry name" value="AcylCoA_DH/ox_N"/>
</dbReference>
<dbReference type="InterPro" id="IPR037069">
    <property type="entry name" value="AcylCoA_DH/ox_N_sf"/>
</dbReference>
<dbReference type="InterPro" id="IPR009100">
    <property type="entry name" value="AcylCoA_DH/oxidase_NM_dom_sf"/>
</dbReference>
<dbReference type="InterPro" id="IPR023450">
    <property type="entry name" value="CaiA"/>
</dbReference>
<dbReference type="NCBIfam" id="NF002885">
    <property type="entry name" value="PRK03354.1"/>
    <property type="match status" value="1"/>
</dbReference>
<dbReference type="PANTHER" id="PTHR43884">
    <property type="entry name" value="ACYL-COA DEHYDROGENASE"/>
    <property type="match status" value="1"/>
</dbReference>
<dbReference type="PANTHER" id="PTHR43884:SF12">
    <property type="entry name" value="ISOVALERYL-COA DEHYDROGENASE, MITOCHONDRIAL-RELATED"/>
    <property type="match status" value="1"/>
</dbReference>
<dbReference type="Pfam" id="PF00441">
    <property type="entry name" value="Acyl-CoA_dh_1"/>
    <property type="match status" value="1"/>
</dbReference>
<dbReference type="Pfam" id="PF02770">
    <property type="entry name" value="Acyl-CoA_dh_M"/>
    <property type="match status" value="1"/>
</dbReference>
<dbReference type="Pfam" id="PF02771">
    <property type="entry name" value="Acyl-CoA_dh_N"/>
    <property type="match status" value="1"/>
</dbReference>
<dbReference type="PIRSF" id="PIRSF016578">
    <property type="entry name" value="HsaA"/>
    <property type="match status" value="1"/>
</dbReference>
<dbReference type="SUPFAM" id="SSF47203">
    <property type="entry name" value="Acyl-CoA dehydrogenase C-terminal domain-like"/>
    <property type="match status" value="1"/>
</dbReference>
<dbReference type="SUPFAM" id="SSF56645">
    <property type="entry name" value="Acyl-CoA dehydrogenase NM domain-like"/>
    <property type="match status" value="1"/>
</dbReference>
<dbReference type="PROSITE" id="PS00072">
    <property type="entry name" value="ACYL_COA_DH_1"/>
    <property type="match status" value="1"/>
</dbReference>
<dbReference type="PROSITE" id="PS00073">
    <property type="entry name" value="ACYL_COA_DH_2"/>
    <property type="match status" value="1"/>
</dbReference>
<comment type="function">
    <text evidence="1">Catalyzes the reduction of crotonobetainyl-CoA to gamma-butyrobetainyl-CoA.</text>
</comment>
<comment type="catalytic activity">
    <reaction evidence="1">
        <text>4-(trimethylamino)butanoyl-CoA + oxidized [electron-transfer flavoprotein] + H(+) = crotonobetainyl-CoA + reduced [electron-transfer flavoprotein]</text>
        <dbReference type="Rhea" id="RHEA:51584"/>
        <dbReference type="Rhea" id="RHEA-COMP:10685"/>
        <dbReference type="Rhea" id="RHEA-COMP:10686"/>
        <dbReference type="ChEBI" id="CHEBI:15378"/>
        <dbReference type="ChEBI" id="CHEBI:57692"/>
        <dbReference type="ChEBI" id="CHEBI:58307"/>
        <dbReference type="ChEBI" id="CHEBI:60933"/>
        <dbReference type="ChEBI" id="CHEBI:61513"/>
        <dbReference type="EC" id="1.3.8.13"/>
    </reaction>
</comment>
<comment type="cofactor">
    <cofactor evidence="1">
        <name>FAD</name>
        <dbReference type="ChEBI" id="CHEBI:57692"/>
    </cofactor>
</comment>
<comment type="pathway">
    <text evidence="1">Amine and polyamine metabolism; carnitine metabolism.</text>
</comment>
<comment type="subunit">
    <text evidence="1">Homotetramer.</text>
</comment>
<comment type="subcellular location">
    <subcellularLocation>
        <location evidence="1">Cytoplasm</location>
    </subcellularLocation>
</comment>
<comment type="similarity">
    <text evidence="1">Belongs to the acyl-CoA dehydrogenase family.</text>
</comment>
<protein>
    <recommendedName>
        <fullName evidence="1">Crotonobetainyl-CoA reductase</fullName>
        <ecNumber evidence="1">1.3.8.13</ecNumber>
    </recommendedName>
    <alternativeName>
        <fullName evidence="1">Crotonobetainyl-CoA dehydrogenase</fullName>
    </alternativeName>
</protein>
<proteinExistence type="inferred from homology"/>